<sequence length="895" mass="96879">MLSHEITQRWLSYFEARDHHVVPSASLVSQQPGAMFTIAGMVPFIPYFLGQETPPYQRATSVQKCIRTLDIDEVGKTARHGTFFQMAGNFSFGDYFKSQAIPMAWELLTTAPEQGGFGLDPERLWVTVYEGDQESYDLWHDTVGLPAQRIQRMGRDENYWDTGQPGPAGPDSEIFYDRGPRYGKDGGPAVDDDRYIEIWNLVFMQYQRGEGNGKDYEILGELPRKNIDTGLGVERLAMLLQGVENFYETDQVRPVLDAAAKLSGRTYHGAEKAGEQGYDDDVRMRVVADHVRSSLMLIADGVTPGNEGRGYILRRLLRRAVRAMRLLGVTEPCLPVLLPESRDAMKGVYPVVAEDFERISRIAYAEERAFLKTIESGTTRLEHAVEVAKGEQRALSGADAFALHDTFGFPIDLTLEMAEEAGVSVDETAFRALMAEQRQRAQEDARAKKGALADLSELRRMLDDHGSEFTGYTELVTPTTVRAILSGGVSVPAASEGEHVEVVLERTPFYAEAGGQAADVGTIDSSDGAQLTVEDVQQPVKGLSVHKVTVSAGQVLVGDEVTARVDSRRRHDGEAAHSGTHVIHAALHDVLGPDAVQRGSFNKEGYLRFDFSHGEALNAGQIQEIEQIANTAIRDDFEVVTREMPLAEAKKLGAMSLFGEKYGDEVRVVEMNGPWSRELCGGTHVGSTSQLGSLSLVSEQSVGSGNRRVEALVGLNSFNHLAAERTLVNQLTGMLKVQSSAELPERLAATLDKLKETERQLAGLRQQQLQAQAGQLARDAERVGPVTAVLHDAGEIASADALRSLALDLRTRLGSEPAVAAVTGVANDRPLVVVAVNDAARDAGLAAGQLVRTAATTLGGGGGGKPDVAQGGGSDAAKIPDALAAIRRQIQSTAG</sequence>
<dbReference type="EC" id="6.1.1.7" evidence="1"/>
<dbReference type="EMBL" id="AP009152">
    <property type="protein sequence ID" value="BAG29693.1"/>
    <property type="molecule type" value="Genomic_DNA"/>
</dbReference>
<dbReference type="RefSeq" id="WP_012398414.1">
    <property type="nucleotide sequence ID" value="NC_010617.1"/>
</dbReference>
<dbReference type="SMR" id="B2GIA1"/>
<dbReference type="STRING" id="378753.KRH_13460"/>
<dbReference type="KEGG" id="krh:KRH_13460"/>
<dbReference type="eggNOG" id="COG0013">
    <property type="taxonomic scope" value="Bacteria"/>
</dbReference>
<dbReference type="HOGENOM" id="CLU_004485_1_1_11"/>
<dbReference type="OrthoDB" id="9803884at2"/>
<dbReference type="Proteomes" id="UP000008838">
    <property type="component" value="Chromosome"/>
</dbReference>
<dbReference type="GO" id="GO:0005829">
    <property type="term" value="C:cytosol"/>
    <property type="evidence" value="ECO:0007669"/>
    <property type="project" value="TreeGrafter"/>
</dbReference>
<dbReference type="GO" id="GO:0004813">
    <property type="term" value="F:alanine-tRNA ligase activity"/>
    <property type="evidence" value="ECO:0007669"/>
    <property type="project" value="UniProtKB-UniRule"/>
</dbReference>
<dbReference type="GO" id="GO:0002161">
    <property type="term" value="F:aminoacyl-tRNA deacylase activity"/>
    <property type="evidence" value="ECO:0007669"/>
    <property type="project" value="TreeGrafter"/>
</dbReference>
<dbReference type="GO" id="GO:0005524">
    <property type="term" value="F:ATP binding"/>
    <property type="evidence" value="ECO:0007669"/>
    <property type="project" value="UniProtKB-UniRule"/>
</dbReference>
<dbReference type="GO" id="GO:0000049">
    <property type="term" value="F:tRNA binding"/>
    <property type="evidence" value="ECO:0007669"/>
    <property type="project" value="UniProtKB-KW"/>
</dbReference>
<dbReference type="GO" id="GO:0008270">
    <property type="term" value="F:zinc ion binding"/>
    <property type="evidence" value="ECO:0007669"/>
    <property type="project" value="UniProtKB-UniRule"/>
</dbReference>
<dbReference type="GO" id="GO:0006419">
    <property type="term" value="P:alanyl-tRNA aminoacylation"/>
    <property type="evidence" value="ECO:0007669"/>
    <property type="project" value="UniProtKB-UniRule"/>
</dbReference>
<dbReference type="CDD" id="cd00673">
    <property type="entry name" value="AlaRS_core"/>
    <property type="match status" value="1"/>
</dbReference>
<dbReference type="FunFam" id="3.10.310.40:FF:000001">
    <property type="entry name" value="Alanine--tRNA ligase"/>
    <property type="match status" value="1"/>
</dbReference>
<dbReference type="FunFam" id="3.30.54.20:FF:000001">
    <property type="entry name" value="Alanine--tRNA ligase"/>
    <property type="match status" value="1"/>
</dbReference>
<dbReference type="FunFam" id="3.30.930.10:FF:000004">
    <property type="entry name" value="Alanine--tRNA ligase"/>
    <property type="match status" value="1"/>
</dbReference>
<dbReference type="FunFam" id="3.30.980.10:FF:000004">
    <property type="entry name" value="Alanine--tRNA ligase, cytoplasmic"/>
    <property type="match status" value="1"/>
</dbReference>
<dbReference type="Gene3D" id="2.40.30.130">
    <property type="match status" value="1"/>
</dbReference>
<dbReference type="Gene3D" id="3.10.310.40">
    <property type="match status" value="1"/>
</dbReference>
<dbReference type="Gene3D" id="3.30.54.20">
    <property type="match status" value="1"/>
</dbReference>
<dbReference type="Gene3D" id="3.30.930.10">
    <property type="entry name" value="Bira Bifunctional Protein, Domain 2"/>
    <property type="match status" value="1"/>
</dbReference>
<dbReference type="Gene3D" id="3.30.980.10">
    <property type="entry name" value="Threonyl-trna Synthetase, Chain A, domain 2"/>
    <property type="match status" value="1"/>
</dbReference>
<dbReference type="HAMAP" id="MF_00036_B">
    <property type="entry name" value="Ala_tRNA_synth_B"/>
    <property type="match status" value="1"/>
</dbReference>
<dbReference type="InterPro" id="IPR045864">
    <property type="entry name" value="aa-tRNA-synth_II/BPL/LPL"/>
</dbReference>
<dbReference type="InterPro" id="IPR002318">
    <property type="entry name" value="Ala-tRNA-lgiase_IIc"/>
</dbReference>
<dbReference type="InterPro" id="IPR018162">
    <property type="entry name" value="Ala-tRNA-ligase_IIc_anticod-bd"/>
</dbReference>
<dbReference type="InterPro" id="IPR018165">
    <property type="entry name" value="Ala-tRNA-synth_IIc_core"/>
</dbReference>
<dbReference type="InterPro" id="IPR018164">
    <property type="entry name" value="Ala-tRNA-synth_IIc_N"/>
</dbReference>
<dbReference type="InterPro" id="IPR050058">
    <property type="entry name" value="Ala-tRNA_ligase"/>
</dbReference>
<dbReference type="InterPro" id="IPR023033">
    <property type="entry name" value="Ala_tRNA_ligase_euk/bac"/>
</dbReference>
<dbReference type="InterPro" id="IPR003156">
    <property type="entry name" value="DHHA1_dom"/>
</dbReference>
<dbReference type="InterPro" id="IPR018163">
    <property type="entry name" value="Thr/Ala-tRNA-synth_IIc_edit"/>
</dbReference>
<dbReference type="InterPro" id="IPR009000">
    <property type="entry name" value="Transl_B-barrel_sf"/>
</dbReference>
<dbReference type="InterPro" id="IPR012947">
    <property type="entry name" value="tRNA_SAD"/>
</dbReference>
<dbReference type="NCBIfam" id="TIGR00344">
    <property type="entry name" value="alaS"/>
    <property type="match status" value="1"/>
</dbReference>
<dbReference type="PANTHER" id="PTHR11777:SF9">
    <property type="entry name" value="ALANINE--TRNA LIGASE, CYTOPLASMIC"/>
    <property type="match status" value="1"/>
</dbReference>
<dbReference type="PANTHER" id="PTHR11777">
    <property type="entry name" value="ALANYL-TRNA SYNTHETASE"/>
    <property type="match status" value="1"/>
</dbReference>
<dbReference type="Pfam" id="PF02272">
    <property type="entry name" value="DHHA1"/>
    <property type="match status" value="1"/>
</dbReference>
<dbReference type="Pfam" id="PF01411">
    <property type="entry name" value="tRNA-synt_2c"/>
    <property type="match status" value="1"/>
</dbReference>
<dbReference type="Pfam" id="PF07973">
    <property type="entry name" value="tRNA_SAD"/>
    <property type="match status" value="1"/>
</dbReference>
<dbReference type="PRINTS" id="PR00980">
    <property type="entry name" value="TRNASYNTHALA"/>
</dbReference>
<dbReference type="SMART" id="SM00863">
    <property type="entry name" value="tRNA_SAD"/>
    <property type="match status" value="1"/>
</dbReference>
<dbReference type="SUPFAM" id="SSF55681">
    <property type="entry name" value="Class II aaRS and biotin synthetases"/>
    <property type="match status" value="1"/>
</dbReference>
<dbReference type="SUPFAM" id="SSF101353">
    <property type="entry name" value="Putative anticodon-binding domain of alanyl-tRNA synthetase (AlaRS)"/>
    <property type="match status" value="1"/>
</dbReference>
<dbReference type="SUPFAM" id="SSF55186">
    <property type="entry name" value="ThrRS/AlaRS common domain"/>
    <property type="match status" value="1"/>
</dbReference>
<dbReference type="SUPFAM" id="SSF50447">
    <property type="entry name" value="Translation proteins"/>
    <property type="match status" value="1"/>
</dbReference>
<dbReference type="PROSITE" id="PS50860">
    <property type="entry name" value="AA_TRNA_LIGASE_II_ALA"/>
    <property type="match status" value="1"/>
</dbReference>
<gene>
    <name evidence="1" type="primary">alaS</name>
    <name type="ordered locus">KRH_13460</name>
</gene>
<name>SYA_KOCRD</name>
<feature type="chain" id="PRO_0000347642" description="Alanine--tRNA ligase">
    <location>
        <begin position="1"/>
        <end position="895"/>
    </location>
</feature>
<feature type="binding site" evidence="1">
    <location>
        <position position="577"/>
    </location>
    <ligand>
        <name>Zn(2+)</name>
        <dbReference type="ChEBI" id="CHEBI:29105"/>
    </ligand>
</feature>
<feature type="binding site" evidence="1">
    <location>
        <position position="581"/>
    </location>
    <ligand>
        <name>Zn(2+)</name>
        <dbReference type="ChEBI" id="CHEBI:29105"/>
    </ligand>
</feature>
<feature type="binding site" evidence="1">
    <location>
        <position position="680"/>
    </location>
    <ligand>
        <name>Zn(2+)</name>
        <dbReference type="ChEBI" id="CHEBI:29105"/>
    </ligand>
</feature>
<feature type="binding site" evidence="1">
    <location>
        <position position="684"/>
    </location>
    <ligand>
        <name>Zn(2+)</name>
        <dbReference type="ChEBI" id="CHEBI:29105"/>
    </ligand>
</feature>
<proteinExistence type="inferred from homology"/>
<evidence type="ECO:0000255" key="1">
    <source>
        <dbReference type="HAMAP-Rule" id="MF_00036"/>
    </source>
</evidence>
<keyword id="KW-0030">Aminoacyl-tRNA synthetase</keyword>
<keyword id="KW-0067">ATP-binding</keyword>
<keyword id="KW-0963">Cytoplasm</keyword>
<keyword id="KW-0436">Ligase</keyword>
<keyword id="KW-0479">Metal-binding</keyword>
<keyword id="KW-0547">Nucleotide-binding</keyword>
<keyword id="KW-0648">Protein biosynthesis</keyword>
<keyword id="KW-1185">Reference proteome</keyword>
<keyword id="KW-0694">RNA-binding</keyword>
<keyword id="KW-0820">tRNA-binding</keyword>
<keyword id="KW-0862">Zinc</keyword>
<protein>
    <recommendedName>
        <fullName evidence="1">Alanine--tRNA ligase</fullName>
        <ecNumber evidence="1">6.1.1.7</ecNumber>
    </recommendedName>
    <alternativeName>
        <fullName evidence="1">Alanyl-tRNA synthetase</fullName>
        <shortName evidence="1">AlaRS</shortName>
    </alternativeName>
</protein>
<accession>B2GIA1</accession>
<organism>
    <name type="scientific">Kocuria rhizophila (strain ATCC 9341 / DSM 348 / NBRC 103217 / DC2201)</name>
    <dbReference type="NCBI Taxonomy" id="378753"/>
    <lineage>
        <taxon>Bacteria</taxon>
        <taxon>Bacillati</taxon>
        <taxon>Actinomycetota</taxon>
        <taxon>Actinomycetes</taxon>
        <taxon>Micrococcales</taxon>
        <taxon>Micrococcaceae</taxon>
        <taxon>Kocuria</taxon>
    </lineage>
</organism>
<comment type="function">
    <text evidence="1">Catalyzes the attachment of alanine to tRNA(Ala) in a two-step reaction: alanine is first activated by ATP to form Ala-AMP and then transferred to the acceptor end of tRNA(Ala). Also edits incorrectly charged Ser-tRNA(Ala) and Gly-tRNA(Ala) via its editing domain.</text>
</comment>
<comment type="catalytic activity">
    <reaction evidence="1">
        <text>tRNA(Ala) + L-alanine + ATP = L-alanyl-tRNA(Ala) + AMP + diphosphate</text>
        <dbReference type="Rhea" id="RHEA:12540"/>
        <dbReference type="Rhea" id="RHEA-COMP:9657"/>
        <dbReference type="Rhea" id="RHEA-COMP:9923"/>
        <dbReference type="ChEBI" id="CHEBI:30616"/>
        <dbReference type="ChEBI" id="CHEBI:33019"/>
        <dbReference type="ChEBI" id="CHEBI:57972"/>
        <dbReference type="ChEBI" id="CHEBI:78442"/>
        <dbReference type="ChEBI" id="CHEBI:78497"/>
        <dbReference type="ChEBI" id="CHEBI:456215"/>
        <dbReference type="EC" id="6.1.1.7"/>
    </reaction>
</comment>
<comment type="cofactor">
    <cofactor evidence="1">
        <name>Zn(2+)</name>
        <dbReference type="ChEBI" id="CHEBI:29105"/>
    </cofactor>
    <text evidence="1">Binds 1 zinc ion per subunit.</text>
</comment>
<comment type="subcellular location">
    <subcellularLocation>
        <location evidence="1">Cytoplasm</location>
    </subcellularLocation>
</comment>
<comment type="domain">
    <text evidence="1">Consists of three domains; the N-terminal catalytic domain, the editing domain and the C-terminal C-Ala domain. The editing domain removes incorrectly charged amino acids, while the C-Ala domain, along with tRNA(Ala), serves as a bridge to cooperatively bring together the editing and aminoacylation centers thus stimulating deacylation of misacylated tRNAs.</text>
</comment>
<comment type="similarity">
    <text evidence="1">Belongs to the class-II aminoacyl-tRNA synthetase family.</text>
</comment>
<reference key="1">
    <citation type="journal article" date="2008" name="J. Bacteriol.">
        <title>Complete genome sequence of the soil actinomycete Kocuria rhizophila.</title>
        <authorList>
            <person name="Takarada H."/>
            <person name="Sekine M."/>
            <person name="Kosugi H."/>
            <person name="Matsuo Y."/>
            <person name="Fujisawa T."/>
            <person name="Omata S."/>
            <person name="Kishi E."/>
            <person name="Shimizu A."/>
            <person name="Tsukatani N."/>
            <person name="Tanikawa S."/>
            <person name="Fujita N."/>
            <person name="Harayama S."/>
        </authorList>
    </citation>
    <scope>NUCLEOTIDE SEQUENCE [LARGE SCALE GENOMIC DNA]</scope>
    <source>
        <strain>ATCC 9341 / DSM 348 / NBRC 103217 / DC2201</strain>
    </source>
</reference>